<proteinExistence type="predicted"/>
<name>YSCR_VIBAL</name>
<feature type="chain" id="PRO_0000066498" description="Uncharacterized 11.6 kDa protein in scrR 3'region">
    <location>
        <begin position="1"/>
        <end position="99"/>
    </location>
</feature>
<sequence length="99" mass="11599">MYHHQQKIRKHWHRTVLFFSVALLIAWNFAVILHQVDLTPEHHTHHHCQLFSGVQHGIAKAQPTLSTPTFTRIQYHDVFQRLVNSEDIRGAARAPPYFA</sequence>
<reference key="1">
    <citation type="journal article" date="1991" name="Gene">
        <title>Nucleotide sequence and analysis of the Vibrio alginolyticus scr repressor-encoding gene (scrR).</title>
        <authorList>
            <person name="Blatch G.L."/>
            <person name="Woods D.R."/>
        </authorList>
    </citation>
    <scope>NUCLEOTIDE SEQUENCE [GENOMIC DNA]</scope>
</reference>
<protein>
    <recommendedName>
        <fullName>Uncharacterized 11.6 kDa protein in scrR 3'region</fullName>
    </recommendedName>
    <alternativeName>
        <fullName>ORF5</fullName>
    </alternativeName>
</protein>
<organism>
    <name type="scientific">Vibrio alginolyticus</name>
    <dbReference type="NCBI Taxonomy" id="663"/>
    <lineage>
        <taxon>Bacteria</taxon>
        <taxon>Pseudomonadati</taxon>
        <taxon>Pseudomonadota</taxon>
        <taxon>Gammaproteobacteria</taxon>
        <taxon>Vibrionales</taxon>
        <taxon>Vibrionaceae</taxon>
        <taxon>Vibrio</taxon>
    </lineage>
</organism>
<dbReference type="EMBL" id="M35009">
    <property type="protein sequence ID" value="AAA27559.1"/>
    <property type="molecule type" value="Genomic_DNA"/>
</dbReference>
<dbReference type="PIR" id="JH0238">
    <property type="entry name" value="JH0238"/>
</dbReference>
<dbReference type="RefSeq" id="WP_005392338.1">
    <property type="nucleotide sequence ID" value="NZ_JBBKYM010000009.1"/>
</dbReference>
<dbReference type="GeneID" id="57841878"/>
<dbReference type="InterPro" id="IPR019731">
    <property type="entry name" value="DUF2607"/>
</dbReference>
<dbReference type="Pfam" id="PF10795">
    <property type="entry name" value="DUF2607"/>
    <property type="match status" value="1"/>
</dbReference>
<accession>P24509</accession>